<reference key="1">
    <citation type="journal article" date="2005" name="BMC Genomics">
        <title>Characterization of 954 bovine full-CDS cDNA sequences.</title>
        <authorList>
            <person name="Harhay G.P."/>
            <person name="Sonstegard T.S."/>
            <person name="Keele J.W."/>
            <person name="Heaton M.P."/>
            <person name="Clawson M.L."/>
            <person name="Snelling W.M."/>
            <person name="Wiedmann R.T."/>
            <person name="Van Tassell C.P."/>
            <person name="Smith T.P.L."/>
        </authorList>
    </citation>
    <scope>NUCLEOTIDE SEQUENCE [LARGE SCALE MRNA]</scope>
</reference>
<organism>
    <name type="scientific">Bos taurus</name>
    <name type="common">Bovine</name>
    <dbReference type="NCBI Taxonomy" id="9913"/>
    <lineage>
        <taxon>Eukaryota</taxon>
        <taxon>Metazoa</taxon>
        <taxon>Chordata</taxon>
        <taxon>Craniata</taxon>
        <taxon>Vertebrata</taxon>
        <taxon>Euteleostomi</taxon>
        <taxon>Mammalia</taxon>
        <taxon>Eutheria</taxon>
        <taxon>Laurasiatheria</taxon>
        <taxon>Artiodactyla</taxon>
        <taxon>Ruminantia</taxon>
        <taxon>Pecora</taxon>
        <taxon>Bovidae</taxon>
        <taxon>Bovinae</taxon>
        <taxon>Bos</taxon>
    </lineage>
</organism>
<dbReference type="EMBL" id="BT020636">
    <property type="protein sequence ID" value="AAX08653.1"/>
    <property type="molecule type" value="mRNA"/>
</dbReference>
<dbReference type="EMBL" id="BT021174">
    <property type="protein sequence ID" value="AAX31356.1"/>
    <property type="molecule type" value="mRNA"/>
</dbReference>
<dbReference type="RefSeq" id="NP_001014923.1">
    <property type="nucleotide sequence ID" value="NM_001014923.1"/>
</dbReference>
<dbReference type="RefSeq" id="XP_005206207.1">
    <property type="nucleotide sequence ID" value="XM_005206150.5"/>
</dbReference>
<dbReference type="RefSeq" id="XP_005206208.1">
    <property type="nucleotide sequence ID" value="XM_005206151.5"/>
</dbReference>
<dbReference type="RefSeq" id="XP_005206211.1">
    <property type="nucleotide sequence ID" value="XM_005206154.5"/>
</dbReference>
<dbReference type="RefSeq" id="XP_015326431.1">
    <property type="nucleotide sequence ID" value="XM_015470945.1"/>
</dbReference>
<dbReference type="BMRB" id="Q5EAD3"/>
<dbReference type="SMR" id="Q5EAD3"/>
<dbReference type="FunCoup" id="Q5EAD3">
    <property type="interactions" value="55"/>
</dbReference>
<dbReference type="STRING" id="9913.ENSBTAP00000059395"/>
<dbReference type="PaxDb" id="9913-ENSBTAP00000002043"/>
<dbReference type="Ensembl" id="ENSBTAT00000047424.2">
    <property type="protein sequence ID" value="ENSBTAP00000044631.1"/>
    <property type="gene ID" value="ENSBTAG00000001562.4"/>
</dbReference>
<dbReference type="GeneID" id="514006"/>
<dbReference type="KEGG" id="bta:514006"/>
<dbReference type="CTD" id="4778"/>
<dbReference type="VEuPathDB" id="HostDB:ENSBTAG00000001562"/>
<dbReference type="VGNC" id="VGNC:32034">
    <property type="gene designation" value="NFE2"/>
</dbReference>
<dbReference type="eggNOG" id="KOG3863">
    <property type="taxonomic scope" value="Eukaryota"/>
</dbReference>
<dbReference type="GeneTree" id="ENSGT00950000182892"/>
<dbReference type="HOGENOM" id="CLU_058451_0_0_1"/>
<dbReference type="InParanoid" id="Q5EAD3"/>
<dbReference type="OMA" id="YCDIFQH"/>
<dbReference type="OrthoDB" id="7458135at2759"/>
<dbReference type="TreeFam" id="TF326681"/>
<dbReference type="Reactome" id="R-BTA-983231">
    <property type="pathway name" value="Factors involved in megakaryocyte development and platelet production"/>
</dbReference>
<dbReference type="Proteomes" id="UP000009136">
    <property type="component" value="Chromosome 5"/>
</dbReference>
<dbReference type="Bgee" id="ENSBTAG00000001562">
    <property type="expression patterns" value="Expressed in neutrophil and 73 other cell types or tissues"/>
</dbReference>
<dbReference type="GO" id="GO:0005737">
    <property type="term" value="C:cytoplasm"/>
    <property type="evidence" value="ECO:0007669"/>
    <property type="project" value="UniProtKB-SubCell"/>
</dbReference>
<dbReference type="GO" id="GO:0005634">
    <property type="term" value="C:nucleus"/>
    <property type="evidence" value="ECO:0000318"/>
    <property type="project" value="GO_Central"/>
</dbReference>
<dbReference type="GO" id="GO:0000981">
    <property type="term" value="F:DNA-binding transcription factor activity, RNA polymerase II-specific"/>
    <property type="evidence" value="ECO:0000318"/>
    <property type="project" value="GO_Central"/>
</dbReference>
<dbReference type="GO" id="GO:0000978">
    <property type="term" value="F:RNA polymerase II cis-regulatory region sequence-specific DNA binding"/>
    <property type="evidence" value="ECO:0000318"/>
    <property type="project" value="GO_Central"/>
</dbReference>
<dbReference type="GO" id="GO:0006357">
    <property type="term" value="P:regulation of transcription by RNA polymerase II"/>
    <property type="evidence" value="ECO:0000318"/>
    <property type="project" value="GO_Central"/>
</dbReference>
<dbReference type="CDD" id="cd14720">
    <property type="entry name" value="bZIP_NFE2-like"/>
    <property type="match status" value="1"/>
</dbReference>
<dbReference type="FunFam" id="1.10.880.10:FF:000001">
    <property type="entry name" value="Nuclear factor erythroid 2-related factor 2"/>
    <property type="match status" value="1"/>
</dbReference>
<dbReference type="Gene3D" id="1.10.880.10">
    <property type="entry name" value="Transcription factor, Skn-1-like, DNA-binding domain"/>
    <property type="match status" value="1"/>
</dbReference>
<dbReference type="InterPro" id="IPR004827">
    <property type="entry name" value="bZIP"/>
</dbReference>
<dbReference type="InterPro" id="IPR004826">
    <property type="entry name" value="bZIP_Maf"/>
</dbReference>
<dbReference type="InterPro" id="IPR046347">
    <property type="entry name" value="bZIP_sf"/>
</dbReference>
<dbReference type="InterPro" id="IPR047167">
    <property type="entry name" value="NFE2-like"/>
</dbReference>
<dbReference type="InterPro" id="IPR008917">
    <property type="entry name" value="TF_DNA-bd_sf"/>
</dbReference>
<dbReference type="PANTHER" id="PTHR24411">
    <property type="entry name" value="NUCLEAR FACTOR ERYTHROID 2-RELATED FACTOR"/>
    <property type="match status" value="1"/>
</dbReference>
<dbReference type="PANTHER" id="PTHR24411:SF26">
    <property type="entry name" value="TRANSCRIPTION FACTOR NF-E2 45 KDA SUBUNIT"/>
    <property type="match status" value="1"/>
</dbReference>
<dbReference type="Pfam" id="PF03131">
    <property type="entry name" value="bZIP_Maf"/>
    <property type="match status" value="1"/>
</dbReference>
<dbReference type="SMART" id="SM00338">
    <property type="entry name" value="BRLZ"/>
    <property type="match status" value="1"/>
</dbReference>
<dbReference type="SUPFAM" id="SSF47454">
    <property type="entry name" value="A DNA-binding domain in eukaryotic transcription factors"/>
    <property type="match status" value="1"/>
</dbReference>
<dbReference type="SUPFAM" id="SSF57959">
    <property type="entry name" value="Leucine zipper domain"/>
    <property type="match status" value="1"/>
</dbReference>
<dbReference type="PROSITE" id="PS50217">
    <property type="entry name" value="BZIP"/>
    <property type="match status" value="1"/>
</dbReference>
<dbReference type="PROSITE" id="PS00036">
    <property type="entry name" value="BZIP_BASIC"/>
    <property type="match status" value="1"/>
</dbReference>
<evidence type="ECO:0000250" key="1"/>
<evidence type="ECO:0000250" key="2">
    <source>
        <dbReference type="UniProtKB" id="Q07279"/>
    </source>
</evidence>
<evidence type="ECO:0000250" key="3">
    <source>
        <dbReference type="UniProtKB" id="Q16621"/>
    </source>
</evidence>
<evidence type="ECO:0000255" key="4">
    <source>
        <dbReference type="PROSITE-ProRule" id="PRU00978"/>
    </source>
</evidence>
<evidence type="ECO:0000256" key="5">
    <source>
        <dbReference type="SAM" id="MobiDB-lite"/>
    </source>
</evidence>
<evidence type="ECO:0000305" key="6"/>
<feature type="chain" id="PRO_0000244495" description="Transcription factor NF-E2 45 kDa subunit">
    <location>
        <begin position="1"/>
        <end position="374"/>
    </location>
</feature>
<feature type="domain" description="bZIP" evidence="4">
    <location>
        <begin position="267"/>
        <end position="330"/>
    </location>
</feature>
<feature type="region of interest" description="Transactivation domain" evidence="1">
    <location>
        <begin position="1"/>
        <end position="207"/>
    </location>
</feature>
<feature type="region of interest" description="Required for interaction with MAPK8" evidence="1">
    <location>
        <begin position="1"/>
        <end position="83"/>
    </location>
</feature>
<feature type="region of interest" description="Disordered" evidence="5">
    <location>
        <begin position="1"/>
        <end position="21"/>
    </location>
</feature>
<feature type="region of interest" description="Disordered" evidence="5">
    <location>
        <begin position="40"/>
        <end position="61"/>
    </location>
</feature>
<feature type="region of interest" description="Disordered" evidence="5">
    <location>
        <begin position="132"/>
        <end position="165"/>
    </location>
</feature>
<feature type="region of interest" description="Disordered" evidence="5">
    <location>
        <begin position="207"/>
        <end position="227"/>
    </location>
</feature>
<feature type="region of interest" description="Basic motif" evidence="4">
    <location>
        <begin position="269"/>
        <end position="288"/>
    </location>
</feature>
<feature type="region of interest" description="Leucine-zipper" evidence="4">
    <location>
        <begin position="292"/>
        <end position="299"/>
    </location>
</feature>
<feature type="short sequence motif" description="PXY motif 1">
    <location>
        <begin position="61"/>
        <end position="65"/>
    </location>
</feature>
<feature type="short sequence motif" description="PXY motif 2">
    <location>
        <begin position="79"/>
        <end position="83"/>
    </location>
</feature>
<feature type="compositionally biased region" description="Pro residues" evidence="5">
    <location>
        <begin position="48"/>
        <end position="61"/>
    </location>
</feature>
<feature type="modified residue" description="Phosphoserine; by MAPK8" evidence="2">
    <location>
        <position position="158"/>
    </location>
</feature>
<feature type="modified residue" description="Phosphoserine; by PKA" evidence="2">
    <location>
        <position position="171"/>
    </location>
</feature>
<feature type="cross-link" description="Glycyl lysine isopeptide (Lys-Gly) (interchain with G-Cter in SUMO); alternate" evidence="1">
    <location>
        <position position="369"/>
    </location>
</feature>
<feature type="cross-link" description="Glycyl lysine isopeptide (Lys-Gly) (interchain with G-Cter in SUMO1); alternate" evidence="3">
    <location>
        <position position="369"/>
    </location>
</feature>
<sequence length="374" mass="41390">MSPCPPQQSRNRVTQLPIPEPGEMELTWQEIMSITELQGLNAPSEPSFEPPAPVPYPGPPPPPSYCPCSIHSEPGFPLPAPPYELPAPTSHVPDPPYSYGSNMTVPVSKPLTLSGLLSDPLPDPLALLDIGLSAGPSKPQEDPESDSGLSLNYSDAESLELEGTEAGRRRSEYVEMYPVEYPYSLMPNSLTHPNYALPPAETPLALEPSSGPVRAKPTARGEAGSRDERRALAMKIPFPTDKIVNLPVDDFNELLARYPLTESQLALVRDIRRRGKNKVAAQNCRKRKLETIVQLERELERLGSERERLLRARGEADRTLEVMRQQLTDLYRDIFQHLRDEAGNSYSPEDYALHQAADGAIFLVPRGTKMEATD</sequence>
<keyword id="KW-0010">Activator</keyword>
<keyword id="KW-0963">Cytoplasm</keyword>
<keyword id="KW-0238">DNA-binding</keyword>
<keyword id="KW-1017">Isopeptide bond</keyword>
<keyword id="KW-0539">Nucleus</keyword>
<keyword id="KW-0597">Phosphoprotein</keyword>
<keyword id="KW-1185">Reference proteome</keyword>
<keyword id="KW-0804">Transcription</keyword>
<keyword id="KW-0805">Transcription regulation</keyword>
<keyword id="KW-0832">Ubl conjugation</keyword>
<name>NFE2_BOVIN</name>
<comment type="function">
    <text evidence="1">Component of the NF-E2 complex essential for regulating erythroid and megakaryocytic maturation and differentiation. Binds to the hypersensitive site 2 (HS2) of the beta-globin control region (LCR). This subunit (NFE2) recognizes the TCAT/C sequence of the AP-1-like core palindrome present in a number of erythroid and megakaryocytic gene promoters. Requires MAFK or other small MAF proteins for binding to the NF-E2 motif. May play a role in all aspects of hemoglobin production from globin and heme synthesis to procurement of iron (By similarity).</text>
</comment>
<comment type="subunit">
    <text evidence="1">Homodimer; can bind DNA as a homodimer (By similarity). Erythroid transcription activator nuclear factor erythroid-derived 2 (NF-E2), composed of a heterodimer of NFE2 and MAFK, possesses transactivation activity on beta-globin. Also forms high affinity heterodimer with MAFG; the interaction promotes erythropoiesis. Interacts (via the PXY motif 1) with ITCH (via the WW 1 domain); the interaction promotes 'Lys63'-linked ubiquitination of NFE2, translocates it to the cytoplasm and inhibits its transactivation activity. Interacts with KMT2D/MLL2; the interaction promotes transactivation of the beta-globin locus. Interacts with MAPK8 (phosphorylated form); the interaction leads to phosphorylation of NFE2 in undifferentiated cells.</text>
</comment>
<comment type="subcellular location">
    <subcellularLocation>
        <location evidence="4">Nucleus</location>
    </subcellularLocation>
    <subcellularLocation>
        <location evidence="1">Cytoplasm</location>
    </subcellularLocation>
    <text evidence="1">The sumoylated form locates to the nuclear bodies PML oncogenic domains (PODs). Translocated to the cytoplasm through interaction with ITCH.</text>
</comment>
<comment type="domain">
    <text evidence="1">The PXY motifs are required for binding WW domains. PXY1 is required to promote transactivation of beta-globin and for hyperacetylation of histone H3, but not for binding to the HS2 promoter site.</text>
</comment>
<comment type="PTM">
    <text evidence="1">Phosphorylated on serine residues. In undifferentiated erythrocytes, phosphorylated by MAPK8 which then leads to ubiquitination and protein degradation.</text>
</comment>
<comment type="PTM">
    <text evidence="1">Sumoylated. Sumoylation is required for translocation to nuclear bodies PODs, anchoring to the gene loci, and transactivation of the beta-globin gene.</text>
</comment>
<comment type="PTM">
    <text evidence="1">Ubiquitinated mainly by 'Lys63'-linked ubiquitin. Polyubiquitination with 'Lys63'-linked ubiquitin by ITCH retains NFE2 in the cytoplasm preventing its transactivation activity. In undifferentiated erythrocyte, is ubiquitinated after MAPK8-mediatd phosphorylation leading to protein degradation.</text>
</comment>
<comment type="similarity">
    <text evidence="6">Belongs to the bZIP family. CNC subfamily.</text>
</comment>
<protein>
    <recommendedName>
        <fullName>Transcription factor NF-E2 45 kDa subunit</fullName>
    </recommendedName>
    <alternativeName>
        <fullName>Leucine zipper protein NF-E2</fullName>
    </alternativeName>
    <alternativeName>
        <fullName>Nuclear factor, erythroid-derived 2 45 kDa subunit</fullName>
    </alternativeName>
    <alternativeName>
        <fullName>p45 NF-E2</fullName>
    </alternativeName>
</protein>
<proteinExistence type="evidence at transcript level"/>
<accession>Q5EAD3</accession>
<gene>
    <name type="primary">NFE2</name>
</gene>